<dbReference type="EC" id="2.3.1.234" evidence="1"/>
<dbReference type="EMBL" id="BX842647">
    <property type="protein sequence ID" value="CAE78599.1"/>
    <property type="molecule type" value="Genomic_DNA"/>
</dbReference>
<dbReference type="RefSeq" id="WP_011163201.1">
    <property type="nucleotide sequence ID" value="NC_005363.1"/>
</dbReference>
<dbReference type="SMR" id="Q6MQ48"/>
<dbReference type="STRING" id="264462.Bd0636"/>
<dbReference type="GeneID" id="93011728"/>
<dbReference type="KEGG" id="bba:Bd0636"/>
<dbReference type="eggNOG" id="COG0533">
    <property type="taxonomic scope" value="Bacteria"/>
</dbReference>
<dbReference type="HOGENOM" id="CLU_023208_0_2_7"/>
<dbReference type="Proteomes" id="UP000008080">
    <property type="component" value="Chromosome"/>
</dbReference>
<dbReference type="GO" id="GO:0005737">
    <property type="term" value="C:cytoplasm"/>
    <property type="evidence" value="ECO:0007669"/>
    <property type="project" value="UniProtKB-SubCell"/>
</dbReference>
<dbReference type="GO" id="GO:0005506">
    <property type="term" value="F:iron ion binding"/>
    <property type="evidence" value="ECO:0007669"/>
    <property type="project" value="UniProtKB-UniRule"/>
</dbReference>
<dbReference type="GO" id="GO:0061711">
    <property type="term" value="F:N(6)-L-threonylcarbamoyladenine synthase activity"/>
    <property type="evidence" value="ECO:0007669"/>
    <property type="project" value="UniProtKB-EC"/>
</dbReference>
<dbReference type="GO" id="GO:0002949">
    <property type="term" value="P:tRNA threonylcarbamoyladenosine modification"/>
    <property type="evidence" value="ECO:0007669"/>
    <property type="project" value="UniProtKB-UniRule"/>
</dbReference>
<dbReference type="CDD" id="cd24133">
    <property type="entry name" value="ASKHA_NBD_TsaD_bac"/>
    <property type="match status" value="1"/>
</dbReference>
<dbReference type="FunFam" id="3.30.420.40:FF:000012">
    <property type="entry name" value="tRNA N6-adenosine threonylcarbamoyltransferase"/>
    <property type="match status" value="1"/>
</dbReference>
<dbReference type="FunFam" id="3.30.420.40:FF:000040">
    <property type="entry name" value="tRNA N6-adenosine threonylcarbamoyltransferase"/>
    <property type="match status" value="1"/>
</dbReference>
<dbReference type="Gene3D" id="3.30.420.40">
    <property type="match status" value="2"/>
</dbReference>
<dbReference type="HAMAP" id="MF_01445">
    <property type="entry name" value="TsaD"/>
    <property type="match status" value="1"/>
</dbReference>
<dbReference type="InterPro" id="IPR043129">
    <property type="entry name" value="ATPase_NBD"/>
</dbReference>
<dbReference type="InterPro" id="IPR000905">
    <property type="entry name" value="Gcp-like_dom"/>
</dbReference>
<dbReference type="InterPro" id="IPR017861">
    <property type="entry name" value="KAE1/TsaD"/>
</dbReference>
<dbReference type="InterPro" id="IPR022450">
    <property type="entry name" value="TsaD"/>
</dbReference>
<dbReference type="NCBIfam" id="TIGR00329">
    <property type="entry name" value="gcp_kae1"/>
    <property type="match status" value="1"/>
</dbReference>
<dbReference type="NCBIfam" id="TIGR03723">
    <property type="entry name" value="T6A_TsaD_YgjD"/>
    <property type="match status" value="1"/>
</dbReference>
<dbReference type="PANTHER" id="PTHR11735">
    <property type="entry name" value="TRNA N6-ADENOSINE THREONYLCARBAMOYLTRANSFERASE"/>
    <property type="match status" value="1"/>
</dbReference>
<dbReference type="PANTHER" id="PTHR11735:SF6">
    <property type="entry name" value="TRNA N6-ADENOSINE THREONYLCARBAMOYLTRANSFERASE, MITOCHONDRIAL"/>
    <property type="match status" value="1"/>
</dbReference>
<dbReference type="Pfam" id="PF00814">
    <property type="entry name" value="TsaD"/>
    <property type="match status" value="1"/>
</dbReference>
<dbReference type="PRINTS" id="PR00789">
    <property type="entry name" value="OSIALOPTASE"/>
</dbReference>
<dbReference type="SUPFAM" id="SSF53067">
    <property type="entry name" value="Actin-like ATPase domain"/>
    <property type="match status" value="1"/>
</dbReference>
<gene>
    <name evidence="1" type="primary">tsaD</name>
    <name type="synonym">gcp</name>
    <name type="ordered locus">Bd0636</name>
</gene>
<accession>Q6MQ48</accession>
<organism>
    <name type="scientific">Bdellovibrio bacteriovorus (strain ATCC 15356 / DSM 50701 / NCIMB 9529 / HD100)</name>
    <dbReference type="NCBI Taxonomy" id="264462"/>
    <lineage>
        <taxon>Bacteria</taxon>
        <taxon>Pseudomonadati</taxon>
        <taxon>Bdellovibrionota</taxon>
        <taxon>Bdellovibrionia</taxon>
        <taxon>Bdellovibrionales</taxon>
        <taxon>Pseudobdellovibrionaceae</taxon>
        <taxon>Bdellovibrio</taxon>
    </lineage>
</organism>
<name>TSAD_BDEBA</name>
<proteinExistence type="inferred from homology"/>
<keyword id="KW-0012">Acyltransferase</keyword>
<keyword id="KW-0963">Cytoplasm</keyword>
<keyword id="KW-0408">Iron</keyword>
<keyword id="KW-0479">Metal-binding</keyword>
<keyword id="KW-1185">Reference proteome</keyword>
<keyword id="KW-0808">Transferase</keyword>
<keyword id="KW-0819">tRNA processing</keyword>
<sequence>MIERVLAIETSCDDTSVAIVDRTGWVHSVVAASQDLDHEIYGGIVPEIAARNHSIALIPLIEEAFKKANMNWSDVQGIAVTNRPGLIGALIVGLVTAKSLSQAKHLPFLGVNHLEGHLLAPFLRDDKYAPPEDFGYPYVGLAISGGHTSLYQIKGLGDYRILGATKDDAAGECFDKFAKMAGLGFPGGVRVDQMAKAGNPQAFEFPRSMIHDDTFDMSFSGLKSSGQRMLEQLGPELVQERLPDLCASFQEAIVDVLIAKLDRAAKVFRSKRVILTGGVSANSRLRQRAQEWADKKGYTLVIPPLRYCTDNAAMIGYVGALRMARGEVSALDLGPSPQALASDFK</sequence>
<feature type="chain" id="PRO_0000303279" description="tRNA N6-adenosine threonylcarbamoyltransferase">
    <location>
        <begin position="1"/>
        <end position="345"/>
    </location>
</feature>
<feature type="binding site" evidence="1">
    <location>
        <position position="113"/>
    </location>
    <ligand>
        <name>Fe cation</name>
        <dbReference type="ChEBI" id="CHEBI:24875"/>
    </ligand>
</feature>
<feature type="binding site" evidence="1">
    <location>
        <position position="117"/>
    </location>
    <ligand>
        <name>Fe cation</name>
        <dbReference type="ChEBI" id="CHEBI:24875"/>
    </ligand>
</feature>
<feature type="binding site" evidence="1">
    <location>
        <begin position="142"/>
        <end position="146"/>
    </location>
    <ligand>
        <name>substrate</name>
    </ligand>
</feature>
<feature type="binding site" evidence="1">
    <location>
        <position position="175"/>
    </location>
    <ligand>
        <name>substrate</name>
    </ligand>
</feature>
<feature type="binding site" evidence="1">
    <location>
        <position position="188"/>
    </location>
    <ligand>
        <name>substrate</name>
    </ligand>
</feature>
<feature type="binding site" evidence="1">
    <location>
        <position position="192"/>
    </location>
    <ligand>
        <name>substrate</name>
    </ligand>
</feature>
<feature type="binding site" evidence="1">
    <location>
        <position position="282"/>
    </location>
    <ligand>
        <name>substrate</name>
    </ligand>
</feature>
<feature type="binding site" evidence="1">
    <location>
        <position position="310"/>
    </location>
    <ligand>
        <name>Fe cation</name>
        <dbReference type="ChEBI" id="CHEBI:24875"/>
    </ligand>
</feature>
<protein>
    <recommendedName>
        <fullName evidence="1">tRNA N6-adenosine threonylcarbamoyltransferase</fullName>
        <ecNumber evidence="1">2.3.1.234</ecNumber>
    </recommendedName>
    <alternativeName>
        <fullName evidence="1">N6-L-threonylcarbamoyladenine synthase</fullName>
        <shortName evidence="1">t(6)A synthase</shortName>
    </alternativeName>
    <alternativeName>
        <fullName evidence="1">t(6)A37 threonylcarbamoyladenosine biosynthesis protein TsaD</fullName>
    </alternativeName>
    <alternativeName>
        <fullName evidence="1">tRNA threonylcarbamoyladenosine biosynthesis protein TsaD</fullName>
    </alternativeName>
</protein>
<reference key="1">
    <citation type="journal article" date="2004" name="Science">
        <title>A predator unmasked: life cycle of Bdellovibrio bacteriovorus from a genomic perspective.</title>
        <authorList>
            <person name="Rendulic S."/>
            <person name="Jagtap P."/>
            <person name="Rosinus A."/>
            <person name="Eppinger M."/>
            <person name="Baar C."/>
            <person name="Lanz C."/>
            <person name="Keller H."/>
            <person name="Lambert C."/>
            <person name="Evans K.J."/>
            <person name="Goesmann A."/>
            <person name="Meyer F."/>
            <person name="Sockett R.E."/>
            <person name="Schuster S.C."/>
        </authorList>
    </citation>
    <scope>NUCLEOTIDE SEQUENCE [LARGE SCALE GENOMIC DNA]</scope>
    <source>
        <strain>ATCC 15356 / DSM 50701 / NCIMB 9529 / HD100</strain>
    </source>
</reference>
<evidence type="ECO:0000255" key="1">
    <source>
        <dbReference type="HAMAP-Rule" id="MF_01445"/>
    </source>
</evidence>
<comment type="function">
    <text evidence="1">Required for the formation of a threonylcarbamoyl group on adenosine at position 37 (t(6)A37) in tRNAs that read codons beginning with adenine. Is involved in the transfer of the threonylcarbamoyl moiety of threonylcarbamoyl-AMP (TC-AMP) to the N6 group of A37, together with TsaE and TsaB. TsaD likely plays a direct catalytic role in this reaction.</text>
</comment>
<comment type="catalytic activity">
    <reaction evidence="1">
        <text>L-threonylcarbamoyladenylate + adenosine(37) in tRNA = N(6)-L-threonylcarbamoyladenosine(37) in tRNA + AMP + H(+)</text>
        <dbReference type="Rhea" id="RHEA:37059"/>
        <dbReference type="Rhea" id="RHEA-COMP:10162"/>
        <dbReference type="Rhea" id="RHEA-COMP:10163"/>
        <dbReference type="ChEBI" id="CHEBI:15378"/>
        <dbReference type="ChEBI" id="CHEBI:73682"/>
        <dbReference type="ChEBI" id="CHEBI:74411"/>
        <dbReference type="ChEBI" id="CHEBI:74418"/>
        <dbReference type="ChEBI" id="CHEBI:456215"/>
        <dbReference type="EC" id="2.3.1.234"/>
    </reaction>
</comment>
<comment type="cofactor">
    <cofactor evidence="1">
        <name>Fe(2+)</name>
        <dbReference type="ChEBI" id="CHEBI:29033"/>
    </cofactor>
    <text evidence="1">Binds 1 Fe(2+) ion per subunit.</text>
</comment>
<comment type="subcellular location">
    <subcellularLocation>
        <location evidence="1">Cytoplasm</location>
    </subcellularLocation>
</comment>
<comment type="similarity">
    <text evidence="1">Belongs to the KAE1 / TsaD family.</text>
</comment>